<keyword id="KW-1185">Reference proteome</keyword>
<keyword id="KW-0687">Ribonucleoprotein</keyword>
<keyword id="KW-0689">Ribosomal protein</keyword>
<keyword id="KW-0694">RNA-binding</keyword>
<keyword id="KW-0699">rRNA-binding</keyword>
<dbReference type="EMBL" id="AE017180">
    <property type="protein sequence ID" value="AAR36250.1"/>
    <property type="molecule type" value="Genomic_DNA"/>
</dbReference>
<dbReference type="RefSeq" id="NP_953900.1">
    <property type="nucleotide sequence ID" value="NC_002939.5"/>
</dbReference>
<dbReference type="RefSeq" id="WP_010943486.1">
    <property type="nucleotide sequence ID" value="NC_002939.5"/>
</dbReference>
<dbReference type="SMR" id="P60454"/>
<dbReference type="FunCoup" id="P60454">
    <property type="interactions" value="699"/>
</dbReference>
<dbReference type="STRING" id="243231.GSU2857"/>
<dbReference type="EnsemblBacteria" id="AAR36250">
    <property type="protein sequence ID" value="AAR36250"/>
    <property type="gene ID" value="GSU2857"/>
</dbReference>
<dbReference type="KEGG" id="gsu:GSU2857"/>
<dbReference type="PATRIC" id="fig|243231.5.peg.2883"/>
<dbReference type="eggNOG" id="COG0087">
    <property type="taxonomic scope" value="Bacteria"/>
</dbReference>
<dbReference type="HOGENOM" id="CLU_044142_4_1_7"/>
<dbReference type="InParanoid" id="P60454"/>
<dbReference type="OrthoDB" id="9806135at2"/>
<dbReference type="Proteomes" id="UP000000577">
    <property type="component" value="Chromosome"/>
</dbReference>
<dbReference type="GO" id="GO:0022625">
    <property type="term" value="C:cytosolic large ribosomal subunit"/>
    <property type="evidence" value="ECO:0000318"/>
    <property type="project" value="GO_Central"/>
</dbReference>
<dbReference type="GO" id="GO:0019843">
    <property type="term" value="F:rRNA binding"/>
    <property type="evidence" value="ECO:0007669"/>
    <property type="project" value="UniProtKB-UniRule"/>
</dbReference>
<dbReference type="GO" id="GO:0003735">
    <property type="term" value="F:structural constituent of ribosome"/>
    <property type="evidence" value="ECO:0000318"/>
    <property type="project" value="GO_Central"/>
</dbReference>
<dbReference type="GO" id="GO:0006412">
    <property type="term" value="P:translation"/>
    <property type="evidence" value="ECO:0007669"/>
    <property type="project" value="UniProtKB-UniRule"/>
</dbReference>
<dbReference type="FunFam" id="2.40.30.10:FF:000004">
    <property type="entry name" value="50S ribosomal protein L3"/>
    <property type="match status" value="1"/>
</dbReference>
<dbReference type="FunFam" id="3.30.160.810:FF:000001">
    <property type="entry name" value="50S ribosomal protein L3"/>
    <property type="match status" value="1"/>
</dbReference>
<dbReference type="Gene3D" id="3.30.160.810">
    <property type="match status" value="1"/>
</dbReference>
<dbReference type="Gene3D" id="2.40.30.10">
    <property type="entry name" value="Translation factors"/>
    <property type="match status" value="1"/>
</dbReference>
<dbReference type="HAMAP" id="MF_01325_B">
    <property type="entry name" value="Ribosomal_uL3_B"/>
    <property type="match status" value="1"/>
</dbReference>
<dbReference type="InterPro" id="IPR000597">
    <property type="entry name" value="Ribosomal_uL3"/>
</dbReference>
<dbReference type="InterPro" id="IPR019927">
    <property type="entry name" value="Ribosomal_uL3_bac/org-type"/>
</dbReference>
<dbReference type="InterPro" id="IPR019926">
    <property type="entry name" value="Ribosomal_uL3_CS"/>
</dbReference>
<dbReference type="InterPro" id="IPR009000">
    <property type="entry name" value="Transl_B-barrel_sf"/>
</dbReference>
<dbReference type="NCBIfam" id="TIGR03625">
    <property type="entry name" value="L3_bact"/>
    <property type="match status" value="1"/>
</dbReference>
<dbReference type="PANTHER" id="PTHR11229">
    <property type="entry name" value="50S RIBOSOMAL PROTEIN L3"/>
    <property type="match status" value="1"/>
</dbReference>
<dbReference type="PANTHER" id="PTHR11229:SF16">
    <property type="entry name" value="LARGE RIBOSOMAL SUBUNIT PROTEIN UL3C"/>
    <property type="match status" value="1"/>
</dbReference>
<dbReference type="Pfam" id="PF00297">
    <property type="entry name" value="Ribosomal_L3"/>
    <property type="match status" value="1"/>
</dbReference>
<dbReference type="SUPFAM" id="SSF50447">
    <property type="entry name" value="Translation proteins"/>
    <property type="match status" value="1"/>
</dbReference>
<dbReference type="PROSITE" id="PS00474">
    <property type="entry name" value="RIBOSOMAL_L3"/>
    <property type="match status" value="1"/>
</dbReference>
<accession>P60454</accession>
<reference key="1">
    <citation type="journal article" date="2003" name="Science">
        <title>Genome of Geobacter sulfurreducens: metal reduction in subsurface environments.</title>
        <authorList>
            <person name="Methe B.A."/>
            <person name="Nelson K.E."/>
            <person name="Eisen J.A."/>
            <person name="Paulsen I.T."/>
            <person name="Nelson W.C."/>
            <person name="Heidelberg J.F."/>
            <person name="Wu D."/>
            <person name="Wu M."/>
            <person name="Ward N.L."/>
            <person name="Beanan M.J."/>
            <person name="Dodson R.J."/>
            <person name="Madupu R."/>
            <person name="Brinkac L.M."/>
            <person name="Daugherty S.C."/>
            <person name="DeBoy R.T."/>
            <person name="Durkin A.S."/>
            <person name="Gwinn M.L."/>
            <person name="Kolonay J.F."/>
            <person name="Sullivan S.A."/>
            <person name="Haft D.H."/>
            <person name="Selengut J."/>
            <person name="Davidsen T.M."/>
            <person name="Zafar N."/>
            <person name="White O."/>
            <person name="Tran B."/>
            <person name="Romero C."/>
            <person name="Forberger H.A."/>
            <person name="Weidman J.F."/>
            <person name="Khouri H.M."/>
            <person name="Feldblyum T.V."/>
            <person name="Utterback T.R."/>
            <person name="Van Aken S.E."/>
            <person name="Lovley D.R."/>
            <person name="Fraser C.M."/>
        </authorList>
    </citation>
    <scope>NUCLEOTIDE SEQUENCE [LARGE SCALE GENOMIC DNA]</scope>
    <source>
        <strain>ATCC 51573 / DSM 12127 / PCA</strain>
    </source>
</reference>
<gene>
    <name evidence="1" type="primary">rplC</name>
    <name type="ordered locus">GSU2857</name>
</gene>
<sequence length="210" mass="22621">MKKGLIAKKLGMTQIFAEDGKRIPVTVVQAGPCVVLQKKTSATDGYDAIQVGFLSQEARKVTKPMLGHIKAAGQGAFAHIREFRLDDVDRYNVGDVISADAFEVGEYIDVTGTSIGKGFQGVIKRWGFRGGRSSHGSCFHRAPGSIGSSAYPSRVFKNKKMPGQLGNERVTVQRLQVVRVDAADNILLIKGAIPGAKNGIVLVKDTVKPR</sequence>
<evidence type="ECO:0000255" key="1">
    <source>
        <dbReference type="HAMAP-Rule" id="MF_01325"/>
    </source>
</evidence>
<evidence type="ECO:0000305" key="2"/>
<protein>
    <recommendedName>
        <fullName evidence="1">Large ribosomal subunit protein uL3</fullName>
    </recommendedName>
    <alternativeName>
        <fullName evidence="2">50S ribosomal protein L3</fullName>
    </alternativeName>
</protein>
<name>RL3_GEOSL</name>
<comment type="function">
    <text evidence="1">One of the primary rRNA binding proteins, it binds directly near the 3'-end of the 23S rRNA, where it nucleates assembly of the 50S subunit.</text>
</comment>
<comment type="subunit">
    <text evidence="1">Part of the 50S ribosomal subunit. Forms a cluster with proteins L14 and L19.</text>
</comment>
<comment type="similarity">
    <text evidence="1">Belongs to the universal ribosomal protein uL3 family.</text>
</comment>
<organism>
    <name type="scientific">Geobacter sulfurreducens (strain ATCC 51573 / DSM 12127 / PCA)</name>
    <dbReference type="NCBI Taxonomy" id="243231"/>
    <lineage>
        <taxon>Bacteria</taxon>
        <taxon>Pseudomonadati</taxon>
        <taxon>Thermodesulfobacteriota</taxon>
        <taxon>Desulfuromonadia</taxon>
        <taxon>Geobacterales</taxon>
        <taxon>Geobacteraceae</taxon>
        <taxon>Geobacter</taxon>
    </lineage>
</organism>
<proteinExistence type="inferred from homology"/>
<feature type="chain" id="PRO_0000077103" description="Large ribosomal subunit protein uL3">
    <location>
        <begin position="1"/>
        <end position="210"/>
    </location>
</feature>